<accession>Q0CE91</accession>
<sequence>MSQYIAELCTLLVEDNFGELFGHIFATLIRYDRLTLPRLRLYSKLPDAQLRRGLAAMVQQHLVYHYTSYEEGVTYYEPNLQSAYYLIRAGKILEFIEERLGKYAATVMSTIMFLGHAQVSYLETLPELQPQAPTAVNGNHEQPEKEIEGEGVEGEGIEEEGHTNGVNGEEALEEQEEQAQPFLLHPTLKALAAHGYIHRVREAHFQSYADNVLDCERTIKARADIKQMKGKKLEETVLELTAEMLRERLDGDLTHGLVFNGVPRGAKRRRGPGGAERSNKKARVDYVAVDEDEEEEEENEWSEDEMGGDNIPMESGITVRVNYEKLDVALRNRRFLELAEQDCSAATIHVYECLLRRIEYKTKQCRDTPEIPREGEEGKQFAAPISLAAIAEDVDPSVDLAGSIGPMDPSQAVNRRGKRPLDDGVNGTHHDGPNGASSDGNRIYDVGQHLALLSEPPHNLTEKKVVANLPSWTVEFRSLACKLRHLELERMIEARYGDVALRVVRVLHAKGKLDEKRLQEISLLPFRVLRQVLASMQAGGFVDLQEVPRDAQRQPSRTIYLWFYDPDRTRASILEDTYKSMSRCLQRLRFERNRLKEFLEKTERSDVKGNEERYLSEAELTLLEQWRAKEALLLGEVARLDEMVAVMRDY</sequence>
<feature type="chain" id="PRO_0000351027" description="DNA-directed RNA polymerase III subunit rpc3">
    <location>
        <begin position="1"/>
        <end position="650"/>
    </location>
</feature>
<feature type="region of interest" description="Disordered" evidence="2">
    <location>
        <begin position="133"/>
        <end position="163"/>
    </location>
</feature>
<feature type="region of interest" description="Disordered" evidence="2">
    <location>
        <begin position="264"/>
        <end position="283"/>
    </location>
</feature>
<feature type="region of interest" description="Disordered" evidence="2">
    <location>
        <begin position="288"/>
        <end position="313"/>
    </location>
</feature>
<feature type="region of interest" description="Disordered" evidence="2">
    <location>
        <begin position="400"/>
        <end position="440"/>
    </location>
</feature>
<feature type="region of interest" description="Leucine-zipper">
    <location>
        <begin position="577"/>
        <end position="598"/>
    </location>
</feature>
<feature type="compositionally biased region" description="Acidic residues" evidence="2">
    <location>
        <begin position="149"/>
        <end position="158"/>
    </location>
</feature>
<feature type="compositionally biased region" description="Acidic residues" evidence="2">
    <location>
        <begin position="288"/>
        <end position="307"/>
    </location>
</feature>
<reference key="1">
    <citation type="submission" date="2005-09" db="EMBL/GenBank/DDBJ databases">
        <title>Annotation of the Aspergillus terreus NIH2624 genome.</title>
        <authorList>
            <person name="Birren B.W."/>
            <person name="Lander E.S."/>
            <person name="Galagan J.E."/>
            <person name="Nusbaum C."/>
            <person name="Devon K."/>
            <person name="Henn M."/>
            <person name="Ma L.-J."/>
            <person name="Jaffe D.B."/>
            <person name="Butler J."/>
            <person name="Alvarez P."/>
            <person name="Gnerre S."/>
            <person name="Grabherr M."/>
            <person name="Kleber M."/>
            <person name="Mauceli E.W."/>
            <person name="Brockman W."/>
            <person name="Rounsley S."/>
            <person name="Young S.K."/>
            <person name="LaButti K."/>
            <person name="Pushparaj V."/>
            <person name="DeCaprio D."/>
            <person name="Crawford M."/>
            <person name="Koehrsen M."/>
            <person name="Engels R."/>
            <person name="Montgomery P."/>
            <person name="Pearson M."/>
            <person name="Howarth C."/>
            <person name="Larson L."/>
            <person name="Luoma S."/>
            <person name="White J."/>
            <person name="Alvarado L."/>
            <person name="Kodira C.D."/>
            <person name="Zeng Q."/>
            <person name="Oleary S."/>
            <person name="Yandava C."/>
            <person name="Denning D.W."/>
            <person name="Nierman W.C."/>
            <person name="Milne T."/>
            <person name="Madden K."/>
        </authorList>
    </citation>
    <scope>NUCLEOTIDE SEQUENCE [LARGE SCALE GENOMIC DNA]</scope>
    <source>
        <strain>NIH 2624 / FGSC A1156</strain>
    </source>
</reference>
<organism>
    <name type="scientific">Aspergillus terreus (strain NIH 2624 / FGSC A1156)</name>
    <dbReference type="NCBI Taxonomy" id="341663"/>
    <lineage>
        <taxon>Eukaryota</taxon>
        <taxon>Fungi</taxon>
        <taxon>Dikarya</taxon>
        <taxon>Ascomycota</taxon>
        <taxon>Pezizomycotina</taxon>
        <taxon>Eurotiomycetes</taxon>
        <taxon>Eurotiomycetidae</taxon>
        <taxon>Eurotiales</taxon>
        <taxon>Aspergillaceae</taxon>
        <taxon>Aspergillus</taxon>
        <taxon>Aspergillus subgen. Circumdati</taxon>
    </lineage>
</organism>
<evidence type="ECO:0000250" key="1"/>
<evidence type="ECO:0000256" key="2">
    <source>
        <dbReference type="SAM" id="MobiDB-lite"/>
    </source>
</evidence>
<evidence type="ECO:0000305" key="3"/>
<proteinExistence type="inferred from homology"/>
<gene>
    <name type="primary">rpc82</name>
    <name type="synonym">rpc3</name>
    <name type="ORF">ATEG_07993</name>
</gene>
<name>RPC3_ASPTN</name>
<keyword id="KW-0240">DNA-directed RNA polymerase</keyword>
<keyword id="KW-0539">Nucleus</keyword>
<keyword id="KW-1185">Reference proteome</keyword>
<keyword id="KW-0804">Transcription</keyword>
<keyword id="KW-0862">Zinc</keyword>
<dbReference type="EMBL" id="CH476605">
    <property type="protein sequence ID" value="EAU31166.1"/>
    <property type="molecule type" value="Genomic_DNA"/>
</dbReference>
<dbReference type="RefSeq" id="XP_001216614.1">
    <property type="nucleotide sequence ID" value="XM_001216614.1"/>
</dbReference>
<dbReference type="SMR" id="Q0CE91"/>
<dbReference type="STRING" id="341663.Q0CE91"/>
<dbReference type="EnsemblFungi" id="EAU31166">
    <property type="protein sequence ID" value="EAU31166"/>
    <property type="gene ID" value="ATEG_07993"/>
</dbReference>
<dbReference type="GeneID" id="4353314"/>
<dbReference type="VEuPathDB" id="FungiDB:ATEG_07993"/>
<dbReference type="eggNOG" id="KOG2587">
    <property type="taxonomic scope" value="Eukaryota"/>
</dbReference>
<dbReference type="HOGENOM" id="CLU_023294_0_0_1"/>
<dbReference type="OMA" id="KHRFVRH"/>
<dbReference type="OrthoDB" id="272392at2759"/>
<dbReference type="Proteomes" id="UP000007963">
    <property type="component" value="Unassembled WGS sequence"/>
</dbReference>
<dbReference type="GO" id="GO:0005666">
    <property type="term" value="C:RNA polymerase III complex"/>
    <property type="evidence" value="ECO:0007669"/>
    <property type="project" value="InterPro"/>
</dbReference>
<dbReference type="GO" id="GO:0003697">
    <property type="term" value="F:single-stranded DNA binding"/>
    <property type="evidence" value="ECO:0007669"/>
    <property type="project" value="InterPro"/>
</dbReference>
<dbReference type="GO" id="GO:0006351">
    <property type="term" value="P:DNA-templated transcription"/>
    <property type="evidence" value="ECO:0007669"/>
    <property type="project" value="InterPro"/>
</dbReference>
<dbReference type="Gene3D" id="1.10.10.10">
    <property type="entry name" value="Winged helix-like DNA-binding domain superfamily/Winged helix DNA-binding domain"/>
    <property type="match status" value="2"/>
</dbReference>
<dbReference type="InterPro" id="IPR055207">
    <property type="entry name" value="POLR3C_WHD"/>
</dbReference>
<dbReference type="InterPro" id="IPR013197">
    <property type="entry name" value="RNA_pol_III_RPC82-rel_HTH"/>
</dbReference>
<dbReference type="InterPro" id="IPR008806">
    <property type="entry name" value="RNA_pol_III_Rpc82_C"/>
</dbReference>
<dbReference type="InterPro" id="IPR039748">
    <property type="entry name" value="RPC3"/>
</dbReference>
<dbReference type="InterPro" id="IPR036388">
    <property type="entry name" value="WH-like_DNA-bd_sf"/>
</dbReference>
<dbReference type="PANTHER" id="PTHR12949:SF0">
    <property type="entry name" value="DNA-DIRECTED RNA POLYMERASE III SUBUNIT RPC3"/>
    <property type="match status" value="1"/>
</dbReference>
<dbReference type="PANTHER" id="PTHR12949">
    <property type="entry name" value="RNA POLYMERASE III DNA DIRECTED -RELATED"/>
    <property type="match status" value="1"/>
</dbReference>
<dbReference type="Pfam" id="PF08221">
    <property type="entry name" value="HTH_9"/>
    <property type="match status" value="1"/>
</dbReference>
<dbReference type="Pfam" id="PF22536">
    <property type="entry name" value="POLR3C_WHD"/>
    <property type="match status" value="1"/>
</dbReference>
<dbReference type="Pfam" id="PF05645">
    <property type="entry name" value="RNA_pol_Rpc82"/>
    <property type="match status" value="1"/>
</dbReference>
<comment type="function">
    <text evidence="1">DNA-dependent RNA polymerase catalyzes the transcription of DNA into RNA using the four ribonucleoside triphosphates as substrates. Specific core component of RNA polymerase III which synthesizes small RNAs, such as 5S rRNA and tRNAs (By similarity).</text>
</comment>
<comment type="subunit">
    <text evidence="1">Component of the RNA polymerase III (Pol III) complex consisting of 17 subunits.</text>
</comment>
<comment type="subcellular location">
    <subcellularLocation>
        <location evidence="1">Nucleus</location>
    </subcellularLocation>
</comment>
<comment type="similarity">
    <text evidence="3">Belongs to the RNA polymerase beta chain family.</text>
</comment>
<protein>
    <recommendedName>
        <fullName>DNA-directed RNA polymerase III subunit rpc3</fullName>
        <shortName>RNA polymerase III subunit C3</shortName>
    </recommendedName>
</protein>